<name>ATP6_HAEIN</name>
<evidence type="ECO:0000255" key="1">
    <source>
        <dbReference type="HAMAP-Rule" id="MF_01393"/>
    </source>
</evidence>
<comment type="function">
    <text evidence="1">Key component of the proton channel; it plays a direct role in the translocation of protons across the membrane.</text>
</comment>
<comment type="subunit">
    <text evidence="1">F-type ATPases have 2 components, CF(1) - the catalytic core - and CF(0) - the membrane proton channel. CF(1) has five subunits: alpha(3), beta(3), gamma(1), delta(1), epsilon(1). CF(0) has three main subunits: a(1), b(2) and c(9-12). The alpha and beta chains form an alternating ring which encloses part of the gamma chain. CF(1) is attached to CF(0) by a central stalk formed by the gamma and epsilon chains, while a peripheral stalk is formed by the delta and b chains.</text>
</comment>
<comment type="subcellular location">
    <subcellularLocation>
        <location evidence="1">Cell inner membrane</location>
        <topology evidence="1">Multi-pass membrane protein</topology>
    </subcellularLocation>
</comment>
<comment type="similarity">
    <text evidence="1">Belongs to the ATPase A chain family.</text>
</comment>
<gene>
    <name evidence="1" type="primary">atpB</name>
    <name type="ordered locus">HI_0485</name>
</gene>
<accession>P43719</accession>
<dbReference type="EMBL" id="L42023">
    <property type="protein sequence ID" value="AAC22143.1"/>
    <property type="molecule type" value="Genomic_DNA"/>
</dbReference>
<dbReference type="PIR" id="A64072">
    <property type="entry name" value="A64072"/>
</dbReference>
<dbReference type="RefSeq" id="NP_438645.1">
    <property type="nucleotide sequence ID" value="NC_000907.1"/>
</dbReference>
<dbReference type="SMR" id="P43719"/>
<dbReference type="STRING" id="71421.HI_0485"/>
<dbReference type="EnsemblBacteria" id="AAC22143">
    <property type="protein sequence ID" value="AAC22143"/>
    <property type="gene ID" value="HI_0485"/>
</dbReference>
<dbReference type="KEGG" id="hin:HI_0485"/>
<dbReference type="PATRIC" id="fig|71421.8.peg.504"/>
<dbReference type="eggNOG" id="COG0356">
    <property type="taxonomic scope" value="Bacteria"/>
</dbReference>
<dbReference type="HOGENOM" id="CLU_041018_1_0_6"/>
<dbReference type="OrthoDB" id="9789241at2"/>
<dbReference type="PhylomeDB" id="P43719"/>
<dbReference type="BioCyc" id="HINF71421:G1GJ1-500-MONOMER"/>
<dbReference type="Proteomes" id="UP000000579">
    <property type="component" value="Chromosome"/>
</dbReference>
<dbReference type="GO" id="GO:0005886">
    <property type="term" value="C:plasma membrane"/>
    <property type="evidence" value="ECO:0000318"/>
    <property type="project" value="GO_Central"/>
</dbReference>
<dbReference type="GO" id="GO:0045259">
    <property type="term" value="C:proton-transporting ATP synthase complex"/>
    <property type="evidence" value="ECO:0007669"/>
    <property type="project" value="UniProtKB-KW"/>
</dbReference>
<dbReference type="GO" id="GO:0046933">
    <property type="term" value="F:proton-transporting ATP synthase activity, rotational mechanism"/>
    <property type="evidence" value="ECO:0000318"/>
    <property type="project" value="GO_Central"/>
</dbReference>
<dbReference type="GO" id="GO:0042777">
    <property type="term" value="P:proton motive force-driven plasma membrane ATP synthesis"/>
    <property type="evidence" value="ECO:0000318"/>
    <property type="project" value="GO_Central"/>
</dbReference>
<dbReference type="CDD" id="cd00310">
    <property type="entry name" value="ATP-synt_Fo_a_6"/>
    <property type="match status" value="1"/>
</dbReference>
<dbReference type="FunFam" id="1.20.120.220:FF:000002">
    <property type="entry name" value="ATP synthase subunit a"/>
    <property type="match status" value="1"/>
</dbReference>
<dbReference type="Gene3D" id="1.20.120.220">
    <property type="entry name" value="ATP synthase, F0 complex, subunit A"/>
    <property type="match status" value="1"/>
</dbReference>
<dbReference type="HAMAP" id="MF_01393">
    <property type="entry name" value="ATP_synth_a_bact"/>
    <property type="match status" value="1"/>
</dbReference>
<dbReference type="InterPro" id="IPR045082">
    <property type="entry name" value="ATP_syn_F0_a_bact/chloroplast"/>
</dbReference>
<dbReference type="InterPro" id="IPR000568">
    <property type="entry name" value="ATP_synth_F0_asu"/>
</dbReference>
<dbReference type="InterPro" id="IPR023011">
    <property type="entry name" value="ATP_synth_F0_asu_AS"/>
</dbReference>
<dbReference type="InterPro" id="IPR035908">
    <property type="entry name" value="F0_ATP_A_sf"/>
</dbReference>
<dbReference type="NCBIfam" id="TIGR01131">
    <property type="entry name" value="ATP_synt_6_or_A"/>
    <property type="match status" value="1"/>
</dbReference>
<dbReference type="NCBIfam" id="NF004477">
    <property type="entry name" value="PRK05815.1-1"/>
    <property type="match status" value="1"/>
</dbReference>
<dbReference type="PANTHER" id="PTHR42823">
    <property type="entry name" value="ATP SYNTHASE SUBUNIT A, CHLOROPLASTIC"/>
    <property type="match status" value="1"/>
</dbReference>
<dbReference type="PANTHER" id="PTHR42823:SF3">
    <property type="entry name" value="ATP SYNTHASE SUBUNIT A, CHLOROPLASTIC"/>
    <property type="match status" value="1"/>
</dbReference>
<dbReference type="Pfam" id="PF00119">
    <property type="entry name" value="ATP-synt_A"/>
    <property type="match status" value="1"/>
</dbReference>
<dbReference type="PRINTS" id="PR00123">
    <property type="entry name" value="ATPASEA"/>
</dbReference>
<dbReference type="SUPFAM" id="SSF81336">
    <property type="entry name" value="F1F0 ATP synthase subunit A"/>
    <property type="match status" value="1"/>
</dbReference>
<dbReference type="PROSITE" id="PS00449">
    <property type="entry name" value="ATPASE_A"/>
    <property type="match status" value="1"/>
</dbReference>
<protein>
    <recommendedName>
        <fullName evidence="1">ATP synthase subunit a</fullName>
    </recommendedName>
    <alternativeName>
        <fullName evidence="1">ATP synthase F0 sector subunit a</fullName>
    </alternativeName>
    <alternativeName>
        <fullName evidence="1">F-ATPase subunit 6</fullName>
    </alternativeName>
</protein>
<feature type="chain" id="PRO_0000082056" description="ATP synthase subunit a">
    <location>
        <begin position="1"/>
        <end position="262"/>
    </location>
</feature>
<feature type="transmembrane region" description="Helical" evidence="1">
    <location>
        <begin position="26"/>
        <end position="46"/>
    </location>
</feature>
<feature type="transmembrane region" description="Helical" evidence="1">
    <location>
        <begin position="86"/>
        <end position="106"/>
    </location>
</feature>
<feature type="transmembrane region" description="Helical" evidence="1">
    <location>
        <begin position="130"/>
        <end position="150"/>
    </location>
</feature>
<feature type="transmembrane region" description="Helical" evidence="1">
    <location>
        <begin position="204"/>
        <end position="226"/>
    </location>
</feature>
<feature type="transmembrane region" description="Helical" evidence="1">
    <location>
        <begin position="240"/>
        <end position="260"/>
    </location>
</feature>
<reference key="1">
    <citation type="journal article" date="1995" name="Science">
        <title>Whole-genome random sequencing and assembly of Haemophilus influenzae Rd.</title>
        <authorList>
            <person name="Fleischmann R.D."/>
            <person name="Adams M.D."/>
            <person name="White O."/>
            <person name="Clayton R.A."/>
            <person name="Kirkness E.F."/>
            <person name="Kerlavage A.R."/>
            <person name="Bult C.J."/>
            <person name="Tomb J.-F."/>
            <person name="Dougherty B.A."/>
            <person name="Merrick J.M."/>
            <person name="McKenney K."/>
            <person name="Sutton G.G."/>
            <person name="FitzHugh W."/>
            <person name="Fields C.A."/>
            <person name="Gocayne J.D."/>
            <person name="Scott J.D."/>
            <person name="Shirley R."/>
            <person name="Liu L.-I."/>
            <person name="Glodek A."/>
            <person name="Kelley J.M."/>
            <person name="Weidman J.F."/>
            <person name="Phillips C.A."/>
            <person name="Spriggs T."/>
            <person name="Hedblom E."/>
            <person name="Cotton M.D."/>
            <person name="Utterback T.R."/>
            <person name="Hanna M.C."/>
            <person name="Nguyen D.T."/>
            <person name="Saudek D.M."/>
            <person name="Brandon R.C."/>
            <person name="Fine L.D."/>
            <person name="Fritchman J.L."/>
            <person name="Fuhrmann J.L."/>
            <person name="Geoghagen N.S.M."/>
            <person name="Gnehm C.L."/>
            <person name="McDonald L.A."/>
            <person name="Small K.V."/>
            <person name="Fraser C.M."/>
            <person name="Smith H.O."/>
            <person name="Venter J.C."/>
        </authorList>
    </citation>
    <scope>NUCLEOTIDE SEQUENCE [LARGE SCALE GENOMIC DNA]</scope>
    <source>
        <strain>ATCC 51907 / DSM 11121 / KW20 / Rd</strain>
    </source>
</reference>
<organism>
    <name type="scientific">Haemophilus influenzae (strain ATCC 51907 / DSM 11121 / KW20 / Rd)</name>
    <dbReference type="NCBI Taxonomy" id="71421"/>
    <lineage>
        <taxon>Bacteria</taxon>
        <taxon>Pseudomonadati</taxon>
        <taxon>Pseudomonadota</taxon>
        <taxon>Gammaproteobacteria</taxon>
        <taxon>Pasteurellales</taxon>
        <taxon>Pasteurellaceae</taxon>
        <taxon>Haemophilus</taxon>
    </lineage>
</organism>
<keyword id="KW-0066">ATP synthesis</keyword>
<keyword id="KW-0997">Cell inner membrane</keyword>
<keyword id="KW-1003">Cell membrane</keyword>
<keyword id="KW-0138">CF(0)</keyword>
<keyword id="KW-0375">Hydrogen ion transport</keyword>
<keyword id="KW-0406">Ion transport</keyword>
<keyword id="KW-0472">Membrane</keyword>
<keyword id="KW-1185">Reference proteome</keyword>
<keyword id="KW-0812">Transmembrane</keyword>
<keyword id="KW-1133">Transmembrane helix</keyword>
<keyword id="KW-0813">Transport</keyword>
<sequence>MSGQTTSEYISHHLSFLKTGDGFWNVHIDTLFFSILAAVIFLFVFSRVGKKATTGVPGKMQCLVEIVVEWVNGIVKENFHGPRNVVAPLALTIFCWVFIMNAIDLIPVDFLPQFAGLFGIHYLRAVPTADISATLGMSICVFFLILFYTIKSKGFKGLVKEYTLHPFNHWAFIPVNFILETVTLLAKPISLAFRLFGNMYAGELIFILIAVMYSANMAIAALGIPLHLAWAIFHILVITLQAFIFMMLTVVYLSIAYNKADH</sequence>
<proteinExistence type="inferred from homology"/>